<organism>
    <name type="scientific">Enterococcus faecalis (strain ATCC 700802 / V583)</name>
    <dbReference type="NCBI Taxonomy" id="226185"/>
    <lineage>
        <taxon>Bacteria</taxon>
        <taxon>Bacillati</taxon>
        <taxon>Bacillota</taxon>
        <taxon>Bacilli</taxon>
        <taxon>Lactobacillales</taxon>
        <taxon>Enterococcaceae</taxon>
        <taxon>Enterococcus</taxon>
    </lineage>
</organism>
<comment type="function">
    <text evidence="1">Catalyzes the ATP-dependent transfer of a sulfur to tRNA to produce 4-thiouridine in position 8 of tRNAs, which functions as a near-UV photosensor. Also catalyzes the transfer of sulfur to the sulfur carrier protein ThiS, forming ThiS-thiocarboxylate. This is a step in the synthesis of thiazole, in the thiamine biosynthesis pathway. The sulfur is donated as persulfide by IscS.</text>
</comment>
<comment type="catalytic activity">
    <reaction evidence="1">
        <text>[ThiI sulfur-carrier protein]-S-sulfanyl-L-cysteine + a uridine in tRNA + 2 reduced [2Fe-2S]-[ferredoxin] + ATP + H(+) = [ThiI sulfur-carrier protein]-L-cysteine + a 4-thiouridine in tRNA + 2 oxidized [2Fe-2S]-[ferredoxin] + AMP + diphosphate</text>
        <dbReference type="Rhea" id="RHEA:24176"/>
        <dbReference type="Rhea" id="RHEA-COMP:10000"/>
        <dbReference type="Rhea" id="RHEA-COMP:10001"/>
        <dbReference type="Rhea" id="RHEA-COMP:13337"/>
        <dbReference type="Rhea" id="RHEA-COMP:13338"/>
        <dbReference type="Rhea" id="RHEA-COMP:13339"/>
        <dbReference type="Rhea" id="RHEA-COMP:13340"/>
        <dbReference type="ChEBI" id="CHEBI:15378"/>
        <dbReference type="ChEBI" id="CHEBI:29950"/>
        <dbReference type="ChEBI" id="CHEBI:30616"/>
        <dbReference type="ChEBI" id="CHEBI:33019"/>
        <dbReference type="ChEBI" id="CHEBI:33737"/>
        <dbReference type="ChEBI" id="CHEBI:33738"/>
        <dbReference type="ChEBI" id="CHEBI:61963"/>
        <dbReference type="ChEBI" id="CHEBI:65315"/>
        <dbReference type="ChEBI" id="CHEBI:136798"/>
        <dbReference type="ChEBI" id="CHEBI:456215"/>
        <dbReference type="EC" id="2.8.1.4"/>
    </reaction>
</comment>
<comment type="catalytic activity">
    <reaction evidence="1">
        <text>[ThiS sulfur-carrier protein]-C-terminal Gly-Gly-AMP + S-sulfanyl-L-cysteinyl-[cysteine desulfurase] + AH2 = [ThiS sulfur-carrier protein]-C-terminal-Gly-aminoethanethioate + L-cysteinyl-[cysteine desulfurase] + A + AMP + 2 H(+)</text>
        <dbReference type="Rhea" id="RHEA:43340"/>
        <dbReference type="Rhea" id="RHEA-COMP:12157"/>
        <dbReference type="Rhea" id="RHEA-COMP:12158"/>
        <dbReference type="Rhea" id="RHEA-COMP:12910"/>
        <dbReference type="Rhea" id="RHEA-COMP:19908"/>
        <dbReference type="ChEBI" id="CHEBI:13193"/>
        <dbReference type="ChEBI" id="CHEBI:15378"/>
        <dbReference type="ChEBI" id="CHEBI:17499"/>
        <dbReference type="ChEBI" id="CHEBI:29950"/>
        <dbReference type="ChEBI" id="CHEBI:61963"/>
        <dbReference type="ChEBI" id="CHEBI:90618"/>
        <dbReference type="ChEBI" id="CHEBI:232372"/>
        <dbReference type="ChEBI" id="CHEBI:456215"/>
    </reaction>
</comment>
<comment type="pathway">
    <text evidence="1">Cofactor biosynthesis; thiamine diphosphate biosynthesis.</text>
</comment>
<comment type="subcellular location">
    <subcellularLocation>
        <location evidence="1">Cytoplasm</location>
    </subcellularLocation>
</comment>
<comment type="similarity">
    <text evidence="1">Belongs to the ThiI family.</text>
</comment>
<protein>
    <recommendedName>
        <fullName evidence="1">Probable tRNA sulfurtransferase</fullName>
        <ecNumber evidence="1">2.8.1.4</ecNumber>
    </recommendedName>
    <alternativeName>
        <fullName evidence="1">Sulfur carrier protein ThiS sulfurtransferase</fullName>
    </alternativeName>
    <alternativeName>
        <fullName evidence="1">Thiamine biosynthesis protein ThiI</fullName>
    </alternativeName>
    <alternativeName>
        <fullName evidence="1">tRNA 4-thiouridine synthase</fullName>
    </alternativeName>
</protein>
<feature type="chain" id="PRO_0000154840" description="Probable tRNA sulfurtransferase">
    <location>
        <begin position="1"/>
        <end position="404"/>
    </location>
</feature>
<feature type="domain" description="THUMP" evidence="1">
    <location>
        <begin position="60"/>
        <end position="165"/>
    </location>
</feature>
<feature type="binding site" evidence="1">
    <location>
        <begin position="183"/>
        <end position="184"/>
    </location>
    <ligand>
        <name>ATP</name>
        <dbReference type="ChEBI" id="CHEBI:30616"/>
    </ligand>
</feature>
<feature type="binding site" evidence="1">
    <location>
        <begin position="208"/>
        <end position="209"/>
    </location>
    <ligand>
        <name>ATP</name>
        <dbReference type="ChEBI" id="CHEBI:30616"/>
    </ligand>
</feature>
<feature type="binding site" evidence="1">
    <location>
        <position position="265"/>
    </location>
    <ligand>
        <name>ATP</name>
        <dbReference type="ChEBI" id="CHEBI:30616"/>
    </ligand>
</feature>
<feature type="binding site" evidence="1">
    <location>
        <position position="287"/>
    </location>
    <ligand>
        <name>ATP</name>
        <dbReference type="ChEBI" id="CHEBI:30616"/>
    </ligand>
</feature>
<feature type="binding site" evidence="1">
    <location>
        <position position="296"/>
    </location>
    <ligand>
        <name>ATP</name>
        <dbReference type="ChEBI" id="CHEBI:30616"/>
    </ligand>
</feature>
<evidence type="ECO:0000255" key="1">
    <source>
        <dbReference type="HAMAP-Rule" id="MF_00021"/>
    </source>
</evidence>
<accession>Q82ZW3</accession>
<dbReference type="EC" id="2.8.1.4" evidence="1"/>
<dbReference type="EMBL" id="AE016830">
    <property type="protein sequence ID" value="AAO82622.1"/>
    <property type="molecule type" value="Genomic_DNA"/>
</dbReference>
<dbReference type="RefSeq" id="NP_816552.1">
    <property type="nucleotide sequence ID" value="NC_004668.1"/>
</dbReference>
<dbReference type="RefSeq" id="WP_010714209.1">
    <property type="nucleotide sequence ID" value="NZ_KE136524.1"/>
</dbReference>
<dbReference type="SMR" id="Q82ZW3"/>
<dbReference type="STRING" id="226185.EF_2934"/>
<dbReference type="EnsemblBacteria" id="AAO82622">
    <property type="protein sequence ID" value="AAO82622"/>
    <property type="gene ID" value="EF_2934"/>
</dbReference>
<dbReference type="KEGG" id="efa:EF2934"/>
<dbReference type="PATRIC" id="fig|226185.45.peg.641"/>
<dbReference type="eggNOG" id="COG0301">
    <property type="taxonomic scope" value="Bacteria"/>
</dbReference>
<dbReference type="HOGENOM" id="CLU_037952_4_0_9"/>
<dbReference type="UniPathway" id="UPA00060"/>
<dbReference type="Proteomes" id="UP000001415">
    <property type="component" value="Chromosome"/>
</dbReference>
<dbReference type="GO" id="GO:0005829">
    <property type="term" value="C:cytosol"/>
    <property type="evidence" value="ECO:0007669"/>
    <property type="project" value="TreeGrafter"/>
</dbReference>
<dbReference type="GO" id="GO:0005524">
    <property type="term" value="F:ATP binding"/>
    <property type="evidence" value="ECO:0007669"/>
    <property type="project" value="UniProtKB-UniRule"/>
</dbReference>
<dbReference type="GO" id="GO:0004810">
    <property type="term" value="F:CCA tRNA nucleotidyltransferase activity"/>
    <property type="evidence" value="ECO:0007669"/>
    <property type="project" value="InterPro"/>
</dbReference>
<dbReference type="GO" id="GO:0000049">
    <property type="term" value="F:tRNA binding"/>
    <property type="evidence" value="ECO:0007669"/>
    <property type="project" value="UniProtKB-UniRule"/>
</dbReference>
<dbReference type="GO" id="GO:0140741">
    <property type="term" value="F:tRNA-uracil-4 sulfurtransferase activity"/>
    <property type="evidence" value="ECO:0007669"/>
    <property type="project" value="UniProtKB-EC"/>
</dbReference>
<dbReference type="GO" id="GO:0009228">
    <property type="term" value="P:thiamine biosynthetic process"/>
    <property type="evidence" value="ECO:0007669"/>
    <property type="project" value="UniProtKB-KW"/>
</dbReference>
<dbReference type="GO" id="GO:0009229">
    <property type="term" value="P:thiamine diphosphate biosynthetic process"/>
    <property type="evidence" value="ECO:0007669"/>
    <property type="project" value="UniProtKB-UniRule"/>
</dbReference>
<dbReference type="GO" id="GO:0052837">
    <property type="term" value="P:thiazole biosynthetic process"/>
    <property type="evidence" value="ECO:0007669"/>
    <property type="project" value="TreeGrafter"/>
</dbReference>
<dbReference type="GO" id="GO:0002937">
    <property type="term" value="P:tRNA 4-thiouridine biosynthesis"/>
    <property type="evidence" value="ECO:0007669"/>
    <property type="project" value="TreeGrafter"/>
</dbReference>
<dbReference type="CDD" id="cd01712">
    <property type="entry name" value="PPase_ThiI"/>
    <property type="match status" value="1"/>
</dbReference>
<dbReference type="CDD" id="cd11716">
    <property type="entry name" value="THUMP_ThiI"/>
    <property type="match status" value="1"/>
</dbReference>
<dbReference type="FunFam" id="3.40.50.620:FF:000053">
    <property type="entry name" value="Probable tRNA sulfurtransferase"/>
    <property type="match status" value="1"/>
</dbReference>
<dbReference type="Gene3D" id="3.30.2130.30">
    <property type="match status" value="1"/>
</dbReference>
<dbReference type="Gene3D" id="3.40.50.620">
    <property type="entry name" value="HUPs"/>
    <property type="match status" value="1"/>
</dbReference>
<dbReference type="HAMAP" id="MF_00021">
    <property type="entry name" value="ThiI"/>
    <property type="match status" value="1"/>
</dbReference>
<dbReference type="InterPro" id="IPR014729">
    <property type="entry name" value="Rossmann-like_a/b/a_fold"/>
</dbReference>
<dbReference type="InterPro" id="IPR020536">
    <property type="entry name" value="ThiI_AANH"/>
</dbReference>
<dbReference type="InterPro" id="IPR054173">
    <property type="entry name" value="ThiI_fer"/>
</dbReference>
<dbReference type="InterPro" id="IPR049961">
    <property type="entry name" value="ThiI_N"/>
</dbReference>
<dbReference type="InterPro" id="IPR004114">
    <property type="entry name" value="THUMP_dom"/>
</dbReference>
<dbReference type="InterPro" id="IPR049962">
    <property type="entry name" value="THUMP_ThiI"/>
</dbReference>
<dbReference type="InterPro" id="IPR003720">
    <property type="entry name" value="tRNA_STrfase"/>
</dbReference>
<dbReference type="InterPro" id="IPR050102">
    <property type="entry name" value="tRNA_sulfurtransferase_ThiI"/>
</dbReference>
<dbReference type="NCBIfam" id="TIGR00342">
    <property type="entry name" value="tRNA uracil 4-sulfurtransferase ThiI"/>
    <property type="match status" value="1"/>
</dbReference>
<dbReference type="PANTHER" id="PTHR43209">
    <property type="entry name" value="TRNA SULFURTRANSFERASE"/>
    <property type="match status" value="1"/>
</dbReference>
<dbReference type="PANTHER" id="PTHR43209:SF1">
    <property type="entry name" value="TRNA SULFURTRANSFERASE"/>
    <property type="match status" value="1"/>
</dbReference>
<dbReference type="Pfam" id="PF02568">
    <property type="entry name" value="ThiI"/>
    <property type="match status" value="1"/>
</dbReference>
<dbReference type="Pfam" id="PF22025">
    <property type="entry name" value="ThiI_fer"/>
    <property type="match status" value="1"/>
</dbReference>
<dbReference type="Pfam" id="PF02926">
    <property type="entry name" value="THUMP"/>
    <property type="match status" value="1"/>
</dbReference>
<dbReference type="SMART" id="SM00981">
    <property type="entry name" value="THUMP"/>
    <property type="match status" value="1"/>
</dbReference>
<dbReference type="SUPFAM" id="SSF52402">
    <property type="entry name" value="Adenine nucleotide alpha hydrolases-like"/>
    <property type="match status" value="1"/>
</dbReference>
<dbReference type="SUPFAM" id="SSF143437">
    <property type="entry name" value="THUMP domain-like"/>
    <property type="match status" value="1"/>
</dbReference>
<dbReference type="PROSITE" id="PS51165">
    <property type="entry name" value="THUMP"/>
    <property type="match status" value="1"/>
</dbReference>
<gene>
    <name evidence="1" type="primary">thiI</name>
    <name type="ordered locus">EF_2934</name>
</gene>
<sequence>MKYTEIMVRYGELSTKGKNRKTFIMQLAQNVKRALADFPALKIHADRDRMHILLNGEDSEEVIPKLSKVFGIQNFSPSIRIEKEMPAIRAMVQEVVREVYTPGKTFKITAKRSDHSFELDSNGLNQELGGAVIEAIPEIQVQMKKPDINLRIEIRKDAAYLSYETIRGAGGLPVGTSGRGMLMLSGGIDSPVAGYLAMKRGVEVEAVHFASPPYTSEQALQKAKDLAEKLVPYVGTIQFIEVPFTEIQEEIKRVVPQGYLMTITRRLMLRLTDAIREMRKGLVIINGESLAQVASQTLQSMVAINEVTSTPIIRPVVSMDKTEIIEIAEKIDTFELAIQPFEDCCTIFAPPQPKTRPRLDKAQEYEARLDLEGLMARALEGLKITEISAETAKDKQEDEFADFL</sequence>
<name>THII_ENTFA</name>
<proteinExistence type="inferred from homology"/>
<keyword id="KW-0067">ATP-binding</keyword>
<keyword id="KW-0963">Cytoplasm</keyword>
<keyword id="KW-0547">Nucleotide-binding</keyword>
<keyword id="KW-1185">Reference proteome</keyword>
<keyword id="KW-0694">RNA-binding</keyword>
<keyword id="KW-0784">Thiamine biosynthesis</keyword>
<keyword id="KW-0808">Transferase</keyword>
<keyword id="KW-0820">tRNA-binding</keyword>
<reference key="1">
    <citation type="journal article" date="2003" name="Science">
        <title>Role of mobile DNA in the evolution of vancomycin-resistant Enterococcus faecalis.</title>
        <authorList>
            <person name="Paulsen I.T."/>
            <person name="Banerjei L."/>
            <person name="Myers G.S.A."/>
            <person name="Nelson K.E."/>
            <person name="Seshadri R."/>
            <person name="Read T.D."/>
            <person name="Fouts D.E."/>
            <person name="Eisen J.A."/>
            <person name="Gill S.R."/>
            <person name="Heidelberg J.F."/>
            <person name="Tettelin H."/>
            <person name="Dodson R.J."/>
            <person name="Umayam L.A."/>
            <person name="Brinkac L.M."/>
            <person name="Beanan M.J."/>
            <person name="Daugherty S.C."/>
            <person name="DeBoy R.T."/>
            <person name="Durkin S.A."/>
            <person name="Kolonay J.F."/>
            <person name="Madupu R."/>
            <person name="Nelson W.C."/>
            <person name="Vamathevan J.J."/>
            <person name="Tran B."/>
            <person name="Upton J."/>
            <person name="Hansen T."/>
            <person name="Shetty J."/>
            <person name="Khouri H.M."/>
            <person name="Utterback T.R."/>
            <person name="Radune D."/>
            <person name="Ketchum K.A."/>
            <person name="Dougherty B.A."/>
            <person name="Fraser C.M."/>
        </authorList>
    </citation>
    <scope>NUCLEOTIDE SEQUENCE [LARGE SCALE GENOMIC DNA]</scope>
    <source>
        <strain>ATCC 700802 / V583</strain>
    </source>
</reference>